<sequence length="156" mass="17687">MPRRRVIGQRKILPDPKFKSELLAKFVNILMVDGKKSVAEKIVYTALDTMAEKSGKDHLAVFEEALENVRPAVEVKSRRVGGSTYQVPVEVRPVRRNALAMRWLVEAARKRGEKSMAARLAAEMLDASDNKGTAVKKREDVHRMAEANKAFAHYRW</sequence>
<evidence type="ECO:0000255" key="1">
    <source>
        <dbReference type="HAMAP-Rule" id="MF_00480"/>
    </source>
</evidence>
<evidence type="ECO:0000305" key="2"/>
<name>RS7_VIBVY</name>
<feature type="chain" id="PRO_0000124380" description="Small ribosomal subunit protein uS7">
    <location>
        <begin position="1"/>
        <end position="156"/>
    </location>
</feature>
<comment type="function">
    <text evidence="1">One of the primary rRNA binding proteins, it binds directly to 16S rRNA where it nucleates assembly of the head domain of the 30S subunit. Is located at the subunit interface close to the decoding center, probably blocks exit of the E-site tRNA.</text>
</comment>
<comment type="subunit">
    <text evidence="1">Part of the 30S ribosomal subunit. Contacts proteins S9 and S11.</text>
</comment>
<comment type="similarity">
    <text evidence="1">Belongs to the universal ribosomal protein uS7 family.</text>
</comment>
<gene>
    <name evidence="1" type="primary">rpsG</name>
    <name type="ordered locus">VV3031</name>
</gene>
<reference key="1">
    <citation type="journal article" date="2003" name="Genome Res.">
        <title>Comparative genome analysis of Vibrio vulnificus, a marine pathogen.</title>
        <authorList>
            <person name="Chen C.-Y."/>
            <person name="Wu K.-M."/>
            <person name="Chang Y.-C."/>
            <person name="Chang C.-H."/>
            <person name="Tsai H.-C."/>
            <person name="Liao T.-L."/>
            <person name="Liu Y.-M."/>
            <person name="Chen H.-J."/>
            <person name="Shen A.B.-T."/>
            <person name="Li J.-C."/>
            <person name="Su T.-L."/>
            <person name="Shao C.-P."/>
            <person name="Lee C.-T."/>
            <person name="Hor L.-I."/>
            <person name="Tsai S.-F."/>
        </authorList>
    </citation>
    <scope>NUCLEOTIDE SEQUENCE [LARGE SCALE GENOMIC DNA]</scope>
    <source>
        <strain>YJ016</strain>
    </source>
</reference>
<organism>
    <name type="scientific">Vibrio vulnificus (strain YJ016)</name>
    <dbReference type="NCBI Taxonomy" id="196600"/>
    <lineage>
        <taxon>Bacteria</taxon>
        <taxon>Pseudomonadati</taxon>
        <taxon>Pseudomonadota</taxon>
        <taxon>Gammaproteobacteria</taxon>
        <taxon>Vibrionales</taxon>
        <taxon>Vibrionaceae</taxon>
        <taxon>Vibrio</taxon>
    </lineage>
</organism>
<protein>
    <recommendedName>
        <fullName evidence="1">Small ribosomal subunit protein uS7</fullName>
    </recommendedName>
    <alternativeName>
        <fullName evidence="2">30S ribosomal protein S7</fullName>
    </alternativeName>
</protein>
<keyword id="KW-0687">Ribonucleoprotein</keyword>
<keyword id="KW-0689">Ribosomal protein</keyword>
<keyword id="KW-0694">RNA-binding</keyword>
<keyword id="KW-0699">rRNA-binding</keyword>
<keyword id="KW-0820">tRNA-binding</keyword>
<dbReference type="EMBL" id="BA000037">
    <property type="protein sequence ID" value="BAC95795.1"/>
    <property type="molecule type" value="Genomic_DNA"/>
</dbReference>
<dbReference type="RefSeq" id="WP_011079316.1">
    <property type="nucleotide sequence ID" value="NC_005139.1"/>
</dbReference>
<dbReference type="SMR" id="Q7MH41"/>
<dbReference type="STRING" id="672.VV93_v1c27590"/>
<dbReference type="GeneID" id="95678941"/>
<dbReference type="KEGG" id="vvy:VV3031"/>
<dbReference type="eggNOG" id="COG0049">
    <property type="taxonomic scope" value="Bacteria"/>
</dbReference>
<dbReference type="HOGENOM" id="CLU_072226_1_1_6"/>
<dbReference type="Proteomes" id="UP000002675">
    <property type="component" value="Chromosome I"/>
</dbReference>
<dbReference type="GO" id="GO:0015935">
    <property type="term" value="C:small ribosomal subunit"/>
    <property type="evidence" value="ECO:0007669"/>
    <property type="project" value="InterPro"/>
</dbReference>
<dbReference type="GO" id="GO:0019843">
    <property type="term" value="F:rRNA binding"/>
    <property type="evidence" value="ECO:0007669"/>
    <property type="project" value="UniProtKB-UniRule"/>
</dbReference>
<dbReference type="GO" id="GO:0003735">
    <property type="term" value="F:structural constituent of ribosome"/>
    <property type="evidence" value="ECO:0007669"/>
    <property type="project" value="InterPro"/>
</dbReference>
<dbReference type="GO" id="GO:0000049">
    <property type="term" value="F:tRNA binding"/>
    <property type="evidence" value="ECO:0007669"/>
    <property type="project" value="UniProtKB-UniRule"/>
</dbReference>
<dbReference type="GO" id="GO:0006412">
    <property type="term" value="P:translation"/>
    <property type="evidence" value="ECO:0007669"/>
    <property type="project" value="UniProtKB-UniRule"/>
</dbReference>
<dbReference type="CDD" id="cd14869">
    <property type="entry name" value="uS7_Bacteria"/>
    <property type="match status" value="1"/>
</dbReference>
<dbReference type="FunFam" id="1.10.455.10:FF:000001">
    <property type="entry name" value="30S ribosomal protein S7"/>
    <property type="match status" value="1"/>
</dbReference>
<dbReference type="Gene3D" id="1.10.455.10">
    <property type="entry name" value="Ribosomal protein S7 domain"/>
    <property type="match status" value="1"/>
</dbReference>
<dbReference type="HAMAP" id="MF_00480_B">
    <property type="entry name" value="Ribosomal_uS7_B"/>
    <property type="match status" value="1"/>
</dbReference>
<dbReference type="InterPro" id="IPR000235">
    <property type="entry name" value="Ribosomal_uS7"/>
</dbReference>
<dbReference type="InterPro" id="IPR005717">
    <property type="entry name" value="Ribosomal_uS7_bac/org-type"/>
</dbReference>
<dbReference type="InterPro" id="IPR020606">
    <property type="entry name" value="Ribosomal_uS7_CS"/>
</dbReference>
<dbReference type="InterPro" id="IPR023798">
    <property type="entry name" value="Ribosomal_uS7_dom"/>
</dbReference>
<dbReference type="InterPro" id="IPR036823">
    <property type="entry name" value="Ribosomal_uS7_dom_sf"/>
</dbReference>
<dbReference type="NCBIfam" id="TIGR01029">
    <property type="entry name" value="rpsG_bact"/>
    <property type="match status" value="1"/>
</dbReference>
<dbReference type="PANTHER" id="PTHR11205">
    <property type="entry name" value="RIBOSOMAL PROTEIN S7"/>
    <property type="match status" value="1"/>
</dbReference>
<dbReference type="Pfam" id="PF00177">
    <property type="entry name" value="Ribosomal_S7"/>
    <property type="match status" value="1"/>
</dbReference>
<dbReference type="PIRSF" id="PIRSF002122">
    <property type="entry name" value="RPS7p_RPS7a_RPS5e_RPS7o"/>
    <property type="match status" value="1"/>
</dbReference>
<dbReference type="SUPFAM" id="SSF47973">
    <property type="entry name" value="Ribosomal protein S7"/>
    <property type="match status" value="1"/>
</dbReference>
<dbReference type="PROSITE" id="PS00052">
    <property type="entry name" value="RIBOSOMAL_S7"/>
    <property type="match status" value="1"/>
</dbReference>
<accession>Q7MH41</accession>
<proteinExistence type="inferred from homology"/>